<accession>A8QA64</accession>
<comment type="function">
    <text evidence="1">mRNA-binding protein involved in proper cytoplasmic distribution of mitochondria.</text>
</comment>
<comment type="subunit">
    <text evidence="1">May associate with the eukaryotic translation initiation factor 3 (eIF-3) complex.</text>
</comment>
<comment type="subcellular location">
    <subcellularLocation>
        <location evidence="1">Cytoplasm</location>
    </subcellularLocation>
</comment>
<comment type="similarity">
    <text evidence="1">Belongs to the CLU family.</text>
</comment>
<proteinExistence type="inferred from homology"/>
<feature type="chain" id="PRO_0000366408" description="Clustered mitochondria protein homolog">
    <location>
        <begin position="1"/>
        <end position="1325"/>
    </location>
</feature>
<feature type="domain" description="Clu" evidence="2">
    <location>
        <begin position="311"/>
        <end position="573"/>
    </location>
</feature>
<feature type="region of interest" description="Disordered" evidence="3">
    <location>
        <begin position="893"/>
        <end position="937"/>
    </location>
</feature>
<feature type="region of interest" description="Disordered" evidence="3">
    <location>
        <begin position="1032"/>
        <end position="1063"/>
    </location>
</feature>
<feature type="region of interest" description="Disordered" evidence="3">
    <location>
        <begin position="1245"/>
        <end position="1325"/>
    </location>
</feature>
<feature type="compositionally biased region" description="Basic residues" evidence="3">
    <location>
        <begin position="1265"/>
        <end position="1275"/>
    </location>
</feature>
<feature type="compositionally biased region" description="Low complexity" evidence="3">
    <location>
        <begin position="1276"/>
        <end position="1285"/>
    </location>
</feature>
<feature type="compositionally biased region" description="Basic residues" evidence="3">
    <location>
        <begin position="1314"/>
        <end position="1325"/>
    </location>
</feature>
<keyword id="KW-0963">Cytoplasm</keyword>
<keyword id="KW-1185">Reference proteome</keyword>
<gene>
    <name evidence="1" type="primary">CLU1</name>
    <name evidence="1" type="synonym">TIF31</name>
    <name type="ORF">MGL_3623</name>
</gene>
<protein>
    <recommendedName>
        <fullName evidence="1">Clustered mitochondria protein homolog</fullName>
    </recommendedName>
    <alternativeName>
        <fullName evidence="1">Protein TIF31 homolog</fullName>
    </alternativeName>
</protein>
<reference key="1">
    <citation type="journal article" date="2007" name="Proc. Natl. Acad. Sci. U.S.A.">
        <title>Dandruff-associated Malassezia genomes reveal convergent and divergent virulence traits shared with plant and human fungal pathogens.</title>
        <authorList>
            <person name="Xu J."/>
            <person name="Saunders C.W."/>
            <person name="Hu P."/>
            <person name="Grant R.A."/>
            <person name="Boekhout T."/>
            <person name="Kuramae E.E."/>
            <person name="Kronstad J.W."/>
            <person name="DeAngelis Y.M."/>
            <person name="Reeder N.L."/>
            <person name="Johnstone K.R."/>
            <person name="Leland M."/>
            <person name="Fieno A.M."/>
            <person name="Begley W.M."/>
            <person name="Sun Y."/>
            <person name="Lacey M.P."/>
            <person name="Chaudhary T."/>
            <person name="Keough T."/>
            <person name="Chu L."/>
            <person name="Sears R."/>
            <person name="Yuan B."/>
            <person name="Dawson T.L. Jr."/>
        </authorList>
    </citation>
    <scope>NUCLEOTIDE SEQUENCE [LARGE SCALE GENOMIC DNA]</scope>
    <source>
        <strain>ATCC MYA-4612 / CBS 7966</strain>
    </source>
</reference>
<dbReference type="EMBL" id="AAYY01000014">
    <property type="protein sequence ID" value="EDP41942.1"/>
    <property type="molecule type" value="Genomic_DNA"/>
</dbReference>
<dbReference type="RefSeq" id="XP_001729156.1">
    <property type="nucleotide sequence ID" value="XM_001729104.1"/>
</dbReference>
<dbReference type="SMR" id="A8QA64"/>
<dbReference type="FunCoup" id="A8QA64">
    <property type="interactions" value="404"/>
</dbReference>
<dbReference type="STRING" id="425265.A8QA64"/>
<dbReference type="GeneID" id="5853462"/>
<dbReference type="KEGG" id="mgl:MGL_3623"/>
<dbReference type="VEuPathDB" id="FungiDB:MGL_3623"/>
<dbReference type="InParanoid" id="A8QA64"/>
<dbReference type="OMA" id="HPVWDKD"/>
<dbReference type="OrthoDB" id="771227at2759"/>
<dbReference type="Proteomes" id="UP000008837">
    <property type="component" value="Unassembled WGS sequence"/>
</dbReference>
<dbReference type="GO" id="GO:0005737">
    <property type="term" value="C:cytoplasm"/>
    <property type="evidence" value="ECO:0007669"/>
    <property type="project" value="UniProtKB-SubCell"/>
</dbReference>
<dbReference type="GO" id="GO:0003729">
    <property type="term" value="F:mRNA binding"/>
    <property type="evidence" value="ECO:0007669"/>
    <property type="project" value="TreeGrafter"/>
</dbReference>
<dbReference type="GO" id="GO:0048312">
    <property type="term" value="P:intracellular distribution of mitochondria"/>
    <property type="evidence" value="ECO:0007669"/>
    <property type="project" value="TreeGrafter"/>
</dbReference>
<dbReference type="GO" id="GO:0007005">
    <property type="term" value="P:mitochondrion organization"/>
    <property type="evidence" value="ECO:0007669"/>
    <property type="project" value="UniProtKB-UniRule"/>
</dbReference>
<dbReference type="CDD" id="cd15466">
    <property type="entry name" value="CLU-central"/>
    <property type="match status" value="1"/>
</dbReference>
<dbReference type="Gene3D" id="1.25.40.10">
    <property type="entry name" value="Tetratricopeptide repeat domain"/>
    <property type="match status" value="1"/>
</dbReference>
<dbReference type="HAMAP" id="MF_03013">
    <property type="entry name" value="CLU"/>
    <property type="match status" value="1"/>
</dbReference>
<dbReference type="InterPro" id="IPR033646">
    <property type="entry name" value="CLU-central"/>
</dbReference>
<dbReference type="InterPro" id="IPR025697">
    <property type="entry name" value="CLU_dom"/>
</dbReference>
<dbReference type="InterPro" id="IPR028275">
    <property type="entry name" value="CLU_N"/>
</dbReference>
<dbReference type="InterPro" id="IPR027523">
    <property type="entry name" value="CLU_prot"/>
</dbReference>
<dbReference type="InterPro" id="IPR023231">
    <property type="entry name" value="GSKIP_dom_sf"/>
</dbReference>
<dbReference type="InterPro" id="IPR011990">
    <property type="entry name" value="TPR-like_helical_dom_sf"/>
</dbReference>
<dbReference type="PANTHER" id="PTHR12601:SF6">
    <property type="entry name" value="CLUSTERED MITOCHONDRIA PROTEIN HOMOLOG"/>
    <property type="match status" value="1"/>
</dbReference>
<dbReference type="PANTHER" id="PTHR12601">
    <property type="entry name" value="EUKARYOTIC TRANSLATION INITIATION FACTOR 3 SUBUNIT EIF-3"/>
    <property type="match status" value="1"/>
</dbReference>
<dbReference type="Pfam" id="PF13236">
    <property type="entry name" value="CLU"/>
    <property type="match status" value="1"/>
</dbReference>
<dbReference type="Pfam" id="PF15044">
    <property type="entry name" value="CLU_N"/>
    <property type="match status" value="1"/>
</dbReference>
<dbReference type="Pfam" id="PF12807">
    <property type="entry name" value="eIF3_p135"/>
    <property type="match status" value="1"/>
</dbReference>
<dbReference type="Pfam" id="PF13374">
    <property type="entry name" value="TPR_10"/>
    <property type="match status" value="1"/>
</dbReference>
<dbReference type="Pfam" id="PF13424">
    <property type="entry name" value="TPR_12"/>
    <property type="match status" value="1"/>
</dbReference>
<dbReference type="SUPFAM" id="SSF103107">
    <property type="entry name" value="Hypothetical protein c14orf129, hspc210"/>
    <property type="match status" value="1"/>
</dbReference>
<dbReference type="SUPFAM" id="SSF48452">
    <property type="entry name" value="TPR-like"/>
    <property type="match status" value="1"/>
</dbReference>
<dbReference type="PROSITE" id="PS51823">
    <property type="entry name" value="CLU"/>
    <property type="match status" value="1"/>
</dbReference>
<organism>
    <name type="scientific">Malassezia globosa (strain ATCC MYA-4612 / CBS 7966)</name>
    <name type="common">Dandruff-associated fungus</name>
    <dbReference type="NCBI Taxonomy" id="425265"/>
    <lineage>
        <taxon>Eukaryota</taxon>
        <taxon>Fungi</taxon>
        <taxon>Dikarya</taxon>
        <taxon>Basidiomycota</taxon>
        <taxon>Ustilaginomycotina</taxon>
        <taxon>Malasseziomycetes</taxon>
        <taxon>Malasseziales</taxon>
        <taxon>Malasseziaceae</taxon>
        <taxon>Malassezia</taxon>
    </lineage>
</organism>
<evidence type="ECO:0000255" key="1">
    <source>
        <dbReference type="HAMAP-Rule" id="MF_03013"/>
    </source>
</evidence>
<evidence type="ECO:0000255" key="2">
    <source>
        <dbReference type="PROSITE-ProRule" id="PRU01167"/>
    </source>
</evidence>
<evidence type="ECO:0000256" key="3">
    <source>
        <dbReference type="SAM" id="MobiDB-lite"/>
    </source>
</evidence>
<sequence length="1325" mass="146808">MAEPESEPNATFELELFLPGRPLLPKDVKSLGLPETPPSLKVAVTQHETLNDLRITLNDSPEGYWLGAFRFRRPDSHTRKGELVNEWEELQEVFRHDAPHDRILQVSHEPYNETEVRLHIQRLRDLLSGTQSDPASVSVDAGATVHDAIVHANEWAHDAHMPAPPKPSWRGWPQDGTAQLLPALARYPRVLPKCVRGMALSAWNPPPKSWALRGHLLYLSIDTLEGDVLHITASVNGFFLNASSSQKFQPQPHPSKALHSSSLFDLLCAASPLFLQNFALLFNDPVSTRDYFSALPVMNSLPAAPWLAREPKHESDPMRTQTAFLLTGAMSADTLDGSRDWNEELQSSRELPRSSLAERLMRDRVLNRLYAEFTLAAARVVPRVAAGEVAPMNPADAPAAHMYLYNNLFVTRGTDSVDMYRFLGGDAAAHVAVGKDLQGVRRLGNLDIEGLSLLGTVVIDWLGERWVVQTVLPGLFRQVAADAAASQSDGSTASHVAYGGVEGPDTIHTDPAFHKVLSVAGKSLHVAEHKMRDAQGMEHELCLSVDCKGLRGTDGRMYLLDVSRHTPMDVTWLDHDMEGSVLEGTDTASYPHRLPLLRPELIDAYWDMHLHEFARDKLARQRASNEASSPSTATSSQVDVSDFSLNFHPDAFAEFRTGSGDDARVIQPATDESIPSIAAVRKVSEYLRKEVIVRLISDVAAGLTSAVDGIALTNRMHARGINMRYLGYIANLSQPSQRDHWDQSVVSKLGSGHEALVQAFRRVVIHEMVVRSAKHCLRTYLRALPLMEAAACIAHFANCFLGTEREPSPVPKMPEVIPASTASRSESHKPWMSLTPAKLVEELRIDIRKRFRFELPMFFLETELRKPQALRALCLKMGIQLAVRDYEFEPEAKHAEGQAAAPSSNATKEKTTTSSRSGLSKKGKRAFPPPPSKPLRTTTFVPEDVVCVCPLVKTSTPKSSLSEDAFEAGRISFVRGEREIGTELMLESIGFYEQVYGLVHPETGKCYSKFASFLHHYAAEFAIKAARKASADSNQGSSSDGDRIGTNDAGSADGSKTEHDDQLPEVVKEVFTLENALRFQRQAVTVSERTLGLDHPETMTQYMNLAMMEQSSANLDDALRYQERVMQLWQLLYGRDHPDVVHTLSSIALMLQMRQDYEPSLRAYEASHDLAVRLFGPNSIYTGNMAHELSQALILSGDLKAAIQVEKEAWRIFQERLGSEDPLTKESQALLSGLAATAVRAAKQQHARELVQTRMPSSARSTRSSAHHHHHRHLHQQQQNSSSSPHPIPALANRSIDDLVEYIQGTPGTGSSRAARKRAARAKRS</sequence>
<name>CLU_MALGO</name>